<comment type="function">
    <text evidence="1">Transcription factor that plays a role in the activation of archaeal genes transcribed by RNA polymerase. Facilitates transcription initiation by enhancing TATA-box recognition by TATA-box-binding protein (Tbp), and transcription factor B (Tfb) and RNA polymerase recruitment. Not absolutely required for transcription in vitro, but particularly important in cases where Tbp or Tfb function is not optimal. It dynamically alters the nucleic acid-binding properties of RNA polymerases by stabilizing the initiation complex and destabilizing elongation complexes. Seems to translocate with the RNA polymerase following initiation and acts by binding to the non template strand of the transcription bubble in elongation complexes.</text>
</comment>
<comment type="subunit">
    <text evidence="1">Monomer. Interaction with RNA polymerase subunits RpoF and RpoE is necessary for Tfe stimulatory transcription activity. Able to interact with Tbp and RNA polymerase in the absence of DNA promoter. Interacts both with the preinitiation and elongation complexes.</text>
</comment>
<comment type="domain">
    <text evidence="1">The winged helix domain is involved in binding to DNA in the preinitiation complex.</text>
</comment>
<comment type="similarity">
    <text evidence="1">Belongs to the TFE family.</text>
</comment>
<dbReference type="EMBL" id="CP000477">
    <property type="protein sequence ID" value="ABK15417.1"/>
    <property type="molecule type" value="Genomic_DNA"/>
</dbReference>
<dbReference type="RefSeq" id="WP_011696795.1">
    <property type="nucleotide sequence ID" value="NC_008553.1"/>
</dbReference>
<dbReference type="SMR" id="A0B9P3"/>
<dbReference type="STRING" id="349307.Mthe_1650"/>
<dbReference type="GeneID" id="4462646"/>
<dbReference type="KEGG" id="mtp:Mthe_1650"/>
<dbReference type="HOGENOM" id="CLU_100097_0_0_2"/>
<dbReference type="OrthoDB" id="5935at2157"/>
<dbReference type="Proteomes" id="UP000000674">
    <property type="component" value="Chromosome"/>
</dbReference>
<dbReference type="GO" id="GO:0003677">
    <property type="term" value="F:DNA binding"/>
    <property type="evidence" value="ECO:0007669"/>
    <property type="project" value="UniProtKB-KW"/>
</dbReference>
<dbReference type="GO" id="GO:0006355">
    <property type="term" value="P:regulation of DNA-templated transcription"/>
    <property type="evidence" value="ECO:0007669"/>
    <property type="project" value="InterPro"/>
</dbReference>
<dbReference type="GO" id="GO:0006367">
    <property type="term" value="P:transcription initiation at RNA polymerase II promoter"/>
    <property type="evidence" value="ECO:0007669"/>
    <property type="project" value="InterPro"/>
</dbReference>
<dbReference type="Gene3D" id="1.10.10.10">
    <property type="entry name" value="Winged helix-like DNA-binding domain superfamily/Winged helix DNA-binding domain"/>
    <property type="match status" value="1"/>
</dbReference>
<dbReference type="HAMAP" id="MF_01909">
    <property type="entry name" value="TFE_arch"/>
    <property type="match status" value="1"/>
</dbReference>
<dbReference type="InterPro" id="IPR016481">
    <property type="entry name" value="TF_E_archaea"/>
</dbReference>
<dbReference type="InterPro" id="IPR017919">
    <property type="entry name" value="TFIIE/TFIIEa_HTH"/>
</dbReference>
<dbReference type="InterPro" id="IPR002853">
    <property type="entry name" value="TFIIE_asu"/>
</dbReference>
<dbReference type="InterPro" id="IPR024550">
    <property type="entry name" value="TFIIEa/SarR/Rpc3_HTH_dom"/>
</dbReference>
<dbReference type="InterPro" id="IPR036388">
    <property type="entry name" value="WH-like_DNA-bd_sf"/>
</dbReference>
<dbReference type="InterPro" id="IPR036390">
    <property type="entry name" value="WH_DNA-bd_sf"/>
</dbReference>
<dbReference type="NCBIfam" id="TIGR00373">
    <property type="entry name" value="transcription factor E"/>
    <property type="match status" value="1"/>
</dbReference>
<dbReference type="Pfam" id="PF02002">
    <property type="entry name" value="TFIIE_alpha"/>
    <property type="match status" value="1"/>
</dbReference>
<dbReference type="PIRSF" id="PIRSF006373">
    <property type="entry name" value="TF_E_archaea"/>
    <property type="match status" value="1"/>
</dbReference>
<dbReference type="SMART" id="SM00531">
    <property type="entry name" value="TFIIE"/>
    <property type="match status" value="1"/>
</dbReference>
<dbReference type="SUPFAM" id="SSF46785">
    <property type="entry name" value="Winged helix' DNA-binding domain"/>
    <property type="match status" value="1"/>
</dbReference>
<dbReference type="PROSITE" id="PS51344">
    <property type="entry name" value="HTH_TFE_IIE"/>
    <property type="match status" value="1"/>
</dbReference>
<reference key="1">
    <citation type="submission" date="2006-10" db="EMBL/GenBank/DDBJ databases">
        <title>Complete sequence of Methanosaeta thermophila PT.</title>
        <authorList>
            <consortium name="US DOE Joint Genome Institute"/>
            <person name="Copeland A."/>
            <person name="Lucas S."/>
            <person name="Lapidus A."/>
            <person name="Barry K."/>
            <person name="Detter J.C."/>
            <person name="Glavina del Rio T."/>
            <person name="Hammon N."/>
            <person name="Israni S."/>
            <person name="Pitluck S."/>
            <person name="Chain P."/>
            <person name="Malfatti S."/>
            <person name="Shin M."/>
            <person name="Vergez L."/>
            <person name="Schmutz J."/>
            <person name="Larimer F."/>
            <person name="Land M."/>
            <person name="Hauser L."/>
            <person name="Kyrpides N."/>
            <person name="Kim E."/>
            <person name="Smith K.S."/>
            <person name="Ingram-Smith C."/>
            <person name="Richardson P."/>
        </authorList>
    </citation>
    <scope>NUCLEOTIDE SEQUENCE [LARGE SCALE GENOMIC DNA]</scope>
    <source>
        <strain>DSM 6194 / JCM 14653 / NBRC 101360 / PT</strain>
    </source>
</reference>
<proteinExistence type="inferred from homology"/>
<feature type="chain" id="PRO_0000326607" description="Transcription factor E">
    <location>
        <begin position="1"/>
        <end position="167"/>
    </location>
</feature>
<feature type="domain" description="HTH TFE/IIEalpha-type" evidence="1">
    <location>
        <begin position="5"/>
        <end position="87"/>
    </location>
</feature>
<name>TFE_METTP</name>
<evidence type="ECO:0000255" key="1">
    <source>
        <dbReference type="HAMAP-Rule" id="MF_01909"/>
    </source>
</evidence>
<organism>
    <name type="scientific">Methanothrix thermoacetophila (strain DSM 6194 / JCM 14653 / NBRC 101360 / PT)</name>
    <name type="common">Methanosaeta thermophila</name>
    <dbReference type="NCBI Taxonomy" id="349307"/>
    <lineage>
        <taxon>Archaea</taxon>
        <taxon>Methanobacteriati</taxon>
        <taxon>Methanobacteriota</taxon>
        <taxon>Stenosarchaea group</taxon>
        <taxon>Methanomicrobia</taxon>
        <taxon>Methanotrichales</taxon>
        <taxon>Methanotrichaceae</taxon>
        <taxon>Methanothrix</taxon>
    </lineage>
</organism>
<accession>A0B9P3</accession>
<protein>
    <recommendedName>
        <fullName evidence="1">Transcription factor E</fullName>
        <shortName evidence="1">TFE</shortName>
    </recommendedName>
    <alternativeName>
        <fullName evidence="1">TFIIE subunit alpha homolog</fullName>
    </alternativeName>
    <alternativeName>
        <fullName evidence="1">Transcription initiation factor TFIIE</fullName>
    </alternativeName>
</protein>
<gene>
    <name evidence="1" type="primary">tfe</name>
    <name type="ordered locus">Mthe_1650</name>
</gene>
<keyword id="KW-0238">DNA-binding</keyword>
<keyword id="KW-1185">Reference proteome</keyword>
<keyword id="KW-0804">Transcription</keyword>
<keyword id="KW-0805">Transcription regulation</keyword>
<sequence>MVAVENPIHRAYLLKIVGEEGLRIVEAMPEEEVTDEHLAEITGISLNTVRKSLYLLYEHRLAIYRRKRDPESGWLTYLWKICPESLDSALEAEVRKLINKLNARLRYEKDHVFYACVNGCARFVFEEASENNFTCPFCQGSLEYMENSTIVEVIEERIKELSAALCS</sequence>